<protein>
    <recommendedName>
        <fullName evidence="1">ATP synthase subunit delta</fullName>
    </recommendedName>
    <alternativeName>
        <fullName evidence="1">ATP synthase F(1) sector subunit delta</fullName>
    </alternativeName>
    <alternativeName>
        <fullName evidence="1">F-type ATPase subunit delta</fullName>
        <shortName evidence="1">F-ATPase subunit delta</shortName>
    </alternativeName>
</protein>
<dbReference type="EMBL" id="BA000030">
    <property type="protein sequence ID" value="BAC70595.1"/>
    <property type="molecule type" value="Genomic_DNA"/>
</dbReference>
<dbReference type="RefSeq" id="WP_010984316.1">
    <property type="nucleotide sequence ID" value="NZ_JZJK01000041.1"/>
</dbReference>
<dbReference type="SMR" id="Q82J81"/>
<dbReference type="GeneID" id="41539970"/>
<dbReference type="KEGG" id="sma:SAVERM_2884"/>
<dbReference type="eggNOG" id="COG0712">
    <property type="taxonomic scope" value="Bacteria"/>
</dbReference>
<dbReference type="HOGENOM" id="CLU_088880_0_0_11"/>
<dbReference type="OrthoDB" id="5242917at2"/>
<dbReference type="Proteomes" id="UP000000428">
    <property type="component" value="Chromosome"/>
</dbReference>
<dbReference type="GO" id="GO:0005886">
    <property type="term" value="C:plasma membrane"/>
    <property type="evidence" value="ECO:0007669"/>
    <property type="project" value="UniProtKB-SubCell"/>
</dbReference>
<dbReference type="GO" id="GO:0045259">
    <property type="term" value="C:proton-transporting ATP synthase complex"/>
    <property type="evidence" value="ECO:0007669"/>
    <property type="project" value="UniProtKB-KW"/>
</dbReference>
<dbReference type="GO" id="GO:0046933">
    <property type="term" value="F:proton-transporting ATP synthase activity, rotational mechanism"/>
    <property type="evidence" value="ECO:0007669"/>
    <property type="project" value="UniProtKB-UniRule"/>
</dbReference>
<dbReference type="Gene3D" id="1.10.520.20">
    <property type="entry name" value="N-terminal domain of the delta subunit of the F1F0-ATP synthase"/>
    <property type="match status" value="1"/>
</dbReference>
<dbReference type="HAMAP" id="MF_01416">
    <property type="entry name" value="ATP_synth_delta_bact"/>
    <property type="match status" value="1"/>
</dbReference>
<dbReference type="InterPro" id="IPR026015">
    <property type="entry name" value="ATP_synth_OSCP/delta_N_sf"/>
</dbReference>
<dbReference type="InterPro" id="IPR020781">
    <property type="entry name" value="ATPase_OSCP/d_CS"/>
</dbReference>
<dbReference type="InterPro" id="IPR000711">
    <property type="entry name" value="ATPase_OSCP/dsu"/>
</dbReference>
<dbReference type="NCBIfam" id="TIGR01145">
    <property type="entry name" value="ATP_synt_delta"/>
    <property type="match status" value="1"/>
</dbReference>
<dbReference type="NCBIfam" id="NF009967">
    <property type="entry name" value="PRK13430.1"/>
    <property type="match status" value="1"/>
</dbReference>
<dbReference type="PANTHER" id="PTHR11910">
    <property type="entry name" value="ATP SYNTHASE DELTA CHAIN"/>
    <property type="match status" value="1"/>
</dbReference>
<dbReference type="Pfam" id="PF00213">
    <property type="entry name" value="OSCP"/>
    <property type="match status" value="1"/>
</dbReference>
<dbReference type="PRINTS" id="PR00125">
    <property type="entry name" value="ATPASEDELTA"/>
</dbReference>
<dbReference type="PROSITE" id="PS00389">
    <property type="entry name" value="ATPASE_DELTA"/>
    <property type="match status" value="1"/>
</dbReference>
<gene>
    <name evidence="1" type="primary">atpH</name>
    <name type="ordered locus">SAV_2884</name>
</gene>
<accession>Q82J81</accession>
<evidence type="ECO:0000255" key="1">
    <source>
        <dbReference type="HAMAP-Rule" id="MF_01416"/>
    </source>
</evidence>
<keyword id="KW-0066">ATP synthesis</keyword>
<keyword id="KW-1003">Cell membrane</keyword>
<keyword id="KW-0139">CF(1)</keyword>
<keyword id="KW-0375">Hydrogen ion transport</keyword>
<keyword id="KW-0406">Ion transport</keyword>
<keyword id="KW-0472">Membrane</keyword>
<keyword id="KW-1185">Reference proteome</keyword>
<keyword id="KW-0813">Transport</keyword>
<sequence>MTAHGASREATAAARERLDALTDSTSVDVVQLADELAAVTALLDREVSLRRVLTDPAQAAEAKAELAGRLFGSQIGGPATDLVTGMVRSRWSQSRDLVDAVEELADIADLTAAQRAGVLDDVEDELFRFGRIVSSNPALRAALTDRTADKAARSELVHSLLGGRATATTERLVTRLVTTPRGRSLEAGLESLSKLAAERRDRLVAVVTTAVPLSDTQKQRLGAALATLYGRQMHLNIDVDPEVLGGMRVQVGDEVINGSIADRLEDARRRMAS</sequence>
<feature type="chain" id="PRO_0000371170" description="ATP synthase subunit delta">
    <location>
        <begin position="1"/>
        <end position="273"/>
    </location>
</feature>
<organism>
    <name type="scientific">Streptomyces avermitilis (strain ATCC 31267 / DSM 46492 / JCM 5070 / NBRC 14893 / NCIMB 12804 / NRRL 8165 / MA-4680)</name>
    <dbReference type="NCBI Taxonomy" id="227882"/>
    <lineage>
        <taxon>Bacteria</taxon>
        <taxon>Bacillati</taxon>
        <taxon>Actinomycetota</taxon>
        <taxon>Actinomycetes</taxon>
        <taxon>Kitasatosporales</taxon>
        <taxon>Streptomycetaceae</taxon>
        <taxon>Streptomyces</taxon>
    </lineage>
</organism>
<comment type="function">
    <text evidence="1">F(1)F(0) ATP synthase produces ATP from ADP in the presence of a proton or sodium gradient. F-type ATPases consist of two structural domains, F(1) containing the extramembraneous catalytic core and F(0) containing the membrane proton channel, linked together by a central stalk and a peripheral stalk. During catalysis, ATP synthesis in the catalytic domain of F(1) is coupled via a rotary mechanism of the central stalk subunits to proton translocation.</text>
</comment>
<comment type="function">
    <text evidence="1">This protein is part of the stalk that links CF(0) to CF(1). It either transmits conformational changes from CF(0) to CF(1) or is implicated in proton conduction.</text>
</comment>
<comment type="subunit">
    <text evidence="1">F-type ATPases have 2 components, F(1) - the catalytic core - and F(0) - the membrane proton channel. F(1) has five subunits: alpha(3), beta(3), gamma(1), delta(1), epsilon(1). F(0) has three main subunits: a(1), b(2) and c(10-14). The alpha and beta chains form an alternating ring which encloses part of the gamma chain. F(1) is attached to F(0) by a central stalk formed by the gamma and epsilon chains, while a peripheral stalk is formed by the delta and b chains.</text>
</comment>
<comment type="subcellular location">
    <subcellularLocation>
        <location evidence="1">Cell membrane</location>
        <topology evidence="1">Peripheral membrane protein</topology>
    </subcellularLocation>
</comment>
<comment type="similarity">
    <text evidence="1">Belongs to the ATPase delta chain family.</text>
</comment>
<reference key="1">
    <citation type="journal article" date="2003" name="Nat. Biotechnol.">
        <title>Complete genome sequence and comparative analysis of the industrial microorganism Streptomyces avermitilis.</title>
        <authorList>
            <person name="Ikeda H."/>
            <person name="Ishikawa J."/>
            <person name="Hanamoto A."/>
            <person name="Shinose M."/>
            <person name="Kikuchi H."/>
            <person name="Shiba T."/>
            <person name="Sakaki Y."/>
            <person name="Hattori M."/>
            <person name="Omura S."/>
        </authorList>
    </citation>
    <scope>NUCLEOTIDE SEQUENCE [LARGE SCALE GENOMIC DNA]</scope>
    <source>
        <strain>ATCC 31267 / DSM 46492 / JCM 5070 / NBRC 14893 / NCIMB 12804 / NRRL 8165 / MA-4680</strain>
    </source>
</reference>
<reference key="2">
    <citation type="journal article" date="2001" name="Proc. Natl. Acad. Sci. U.S.A.">
        <title>Genome sequence of an industrial microorganism Streptomyces avermitilis: deducing the ability of producing secondary metabolites.</title>
        <authorList>
            <person name="Omura S."/>
            <person name="Ikeda H."/>
            <person name="Ishikawa J."/>
            <person name="Hanamoto A."/>
            <person name="Takahashi C."/>
            <person name="Shinose M."/>
            <person name="Takahashi Y."/>
            <person name="Horikawa H."/>
            <person name="Nakazawa H."/>
            <person name="Osonoe T."/>
            <person name="Kikuchi H."/>
            <person name="Shiba T."/>
            <person name="Sakaki Y."/>
            <person name="Hattori M."/>
        </authorList>
    </citation>
    <scope>NUCLEOTIDE SEQUENCE [LARGE SCALE GENOMIC DNA]</scope>
    <source>
        <strain>ATCC 31267 / DSM 46492 / JCM 5070 / NBRC 14893 / NCIMB 12804 / NRRL 8165 / MA-4680</strain>
    </source>
</reference>
<name>ATPD_STRAW</name>
<proteinExistence type="inferred from homology"/>